<evidence type="ECO:0000255" key="1"/>
<evidence type="ECO:0000305" key="2"/>
<protein>
    <recommendedName>
        <fullName>Uncharacterized protein AF_2166</fullName>
    </recommendedName>
</protein>
<comment type="subcellular location">
    <subcellularLocation>
        <location evidence="2">Cell membrane</location>
        <topology evidence="2">Multi-pass membrane protein</topology>
    </subcellularLocation>
</comment>
<accession>O28116</accession>
<name>Y2166_ARCFU</name>
<organism>
    <name type="scientific">Archaeoglobus fulgidus (strain ATCC 49558 / DSM 4304 / JCM 9628 / NBRC 100126 / VC-16)</name>
    <dbReference type="NCBI Taxonomy" id="224325"/>
    <lineage>
        <taxon>Archaea</taxon>
        <taxon>Methanobacteriati</taxon>
        <taxon>Methanobacteriota</taxon>
        <taxon>Archaeoglobi</taxon>
        <taxon>Archaeoglobales</taxon>
        <taxon>Archaeoglobaceae</taxon>
        <taxon>Archaeoglobus</taxon>
    </lineage>
</organism>
<reference key="1">
    <citation type="journal article" date="1997" name="Nature">
        <title>The complete genome sequence of the hyperthermophilic, sulphate-reducing archaeon Archaeoglobus fulgidus.</title>
        <authorList>
            <person name="Klenk H.-P."/>
            <person name="Clayton R.A."/>
            <person name="Tomb J.-F."/>
            <person name="White O."/>
            <person name="Nelson K.E."/>
            <person name="Ketchum K.A."/>
            <person name="Dodson R.J."/>
            <person name="Gwinn M.L."/>
            <person name="Hickey E.K."/>
            <person name="Peterson J.D."/>
            <person name="Richardson D.L."/>
            <person name="Kerlavage A.R."/>
            <person name="Graham D.E."/>
            <person name="Kyrpides N.C."/>
            <person name="Fleischmann R.D."/>
            <person name="Quackenbush J."/>
            <person name="Lee N.H."/>
            <person name="Sutton G.G."/>
            <person name="Gill S.R."/>
            <person name="Kirkness E.F."/>
            <person name="Dougherty B.A."/>
            <person name="McKenney K."/>
            <person name="Adams M.D."/>
            <person name="Loftus B.J."/>
            <person name="Peterson S.N."/>
            <person name="Reich C.I."/>
            <person name="McNeil L.K."/>
            <person name="Badger J.H."/>
            <person name="Glodek A."/>
            <person name="Zhou L."/>
            <person name="Overbeek R."/>
            <person name="Gocayne J.D."/>
            <person name="Weidman J.F."/>
            <person name="McDonald L.A."/>
            <person name="Utterback T.R."/>
            <person name="Cotton M.D."/>
            <person name="Spriggs T."/>
            <person name="Artiach P."/>
            <person name="Kaine B.P."/>
            <person name="Sykes S.M."/>
            <person name="Sadow P.W."/>
            <person name="D'Andrea K.P."/>
            <person name="Bowman C."/>
            <person name="Fujii C."/>
            <person name="Garland S.A."/>
            <person name="Mason T.M."/>
            <person name="Olsen G.J."/>
            <person name="Fraser C.M."/>
            <person name="Smith H.O."/>
            <person name="Woese C.R."/>
            <person name="Venter J.C."/>
        </authorList>
    </citation>
    <scope>NUCLEOTIDE SEQUENCE [LARGE SCALE GENOMIC DNA]</scope>
    <source>
        <strain>ATCC 49558 / DSM 4304 / JCM 9628 / NBRC 100126 / VC-16</strain>
    </source>
</reference>
<keyword id="KW-1003">Cell membrane</keyword>
<keyword id="KW-0472">Membrane</keyword>
<keyword id="KW-1185">Reference proteome</keyword>
<keyword id="KW-0812">Transmembrane</keyword>
<keyword id="KW-1133">Transmembrane helix</keyword>
<feature type="chain" id="PRO_0000128109" description="Uncharacterized protein AF_2166">
    <location>
        <begin position="1"/>
        <end position="154"/>
    </location>
</feature>
<feature type="transmembrane region" description="Helical" evidence="1">
    <location>
        <begin position="15"/>
        <end position="37"/>
    </location>
</feature>
<feature type="transmembrane region" description="Helical" evidence="1">
    <location>
        <begin position="58"/>
        <end position="80"/>
    </location>
</feature>
<feature type="transmembrane region" description="Helical" evidence="1">
    <location>
        <begin position="95"/>
        <end position="116"/>
    </location>
</feature>
<feature type="transmembrane region" description="Helical" evidence="1">
    <location>
        <begin position="123"/>
        <end position="145"/>
    </location>
</feature>
<sequence length="154" mass="17267">MLFIFYIPYYPGLGDFSFIINSYATNAIFLAAYALITKSKVDKIKFPIVTMLLVPLDFAAMLAGGLVSWGIVSMPYWLWGDWRLMDELARYRGELGALDAIVGGIILGYSASFAFTKVNRKHLVISWMLANSISTLVVAIFFVPHFCGMPPYRC</sequence>
<proteinExistence type="predicted"/>
<gene>
    <name type="ordered locus">AF_2166</name>
</gene>
<dbReference type="EMBL" id="AE000782">
    <property type="protein sequence ID" value="AAB89089.1"/>
    <property type="molecule type" value="Genomic_DNA"/>
</dbReference>
<dbReference type="PIR" id="F69520">
    <property type="entry name" value="F69520"/>
</dbReference>
<dbReference type="RefSeq" id="WP_010879655.1">
    <property type="nucleotide sequence ID" value="NC_000917.1"/>
</dbReference>
<dbReference type="STRING" id="224325.AF_2166"/>
<dbReference type="PaxDb" id="224325-AF_2166"/>
<dbReference type="EnsemblBacteria" id="AAB89089">
    <property type="protein sequence ID" value="AAB89089"/>
    <property type="gene ID" value="AF_2166"/>
</dbReference>
<dbReference type="KEGG" id="afu:AF_2166"/>
<dbReference type="HOGENOM" id="CLU_1700181_0_0_2"/>
<dbReference type="Proteomes" id="UP000002199">
    <property type="component" value="Chromosome"/>
</dbReference>
<dbReference type="GO" id="GO:0005886">
    <property type="term" value="C:plasma membrane"/>
    <property type="evidence" value="ECO:0007669"/>
    <property type="project" value="UniProtKB-SubCell"/>
</dbReference>